<keyword id="KW-0488">Methylation</keyword>
<keyword id="KW-0687">Ribonucleoprotein</keyword>
<keyword id="KW-0689">Ribosomal protein</keyword>
<keyword id="KW-0694">RNA-binding</keyword>
<keyword id="KW-0699">rRNA-binding</keyword>
<feature type="chain" id="PRO_1000052134" description="Large ribosomal subunit protein uL3">
    <location>
        <begin position="1"/>
        <end position="212"/>
    </location>
</feature>
<feature type="region of interest" description="Disordered" evidence="2">
    <location>
        <begin position="136"/>
        <end position="155"/>
    </location>
</feature>
<feature type="modified residue" description="N5-methylglutamine" evidence="1">
    <location>
        <position position="153"/>
    </location>
</feature>
<proteinExistence type="inferred from homology"/>
<comment type="function">
    <text evidence="1">One of the primary rRNA binding proteins, it binds directly near the 3'-end of the 23S rRNA, where it nucleates assembly of the 50S subunit.</text>
</comment>
<comment type="subunit">
    <text evidence="1">Part of the 50S ribosomal subunit. Forms a cluster with proteins L14 and L19.</text>
</comment>
<comment type="PTM">
    <text evidence="1">Methylated by PrmB.</text>
</comment>
<comment type="similarity">
    <text evidence="1">Belongs to the universal ribosomal protein uL3 family.</text>
</comment>
<accession>A6WHS8</accession>
<dbReference type="EMBL" id="CP000753">
    <property type="protein sequence ID" value="ABS06367.1"/>
    <property type="molecule type" value="Genomic_DNA"/>
</dbReference>
<dbReference type="RefSeq" id="WP_006083600.1">
    <property type="nucleotide sequence ID" value="NC_009665.1"/>
</dbReference>
<dbReference type="SMR" id="A6WHS8"/>
<dbReference type="GeneID" id="11770559"/>
<dbReference type="KEGG" id="sbm:Shew185_0196"/>
<dbReference type="HOGENOM" id="CLU_044142_4_1_6"/>
<dbReference type="GO" id="GO:0022625">
    <property type="term" value="C:cytosolic large ribosomal subunit"/>
    <property type="evidence" value="ECO:0007669"/>
    <property type="project" value="TreeGrafter"/>
</dbReference>
<dbReference type="GO" id="GO:0019843">
    <property type="term" value="F:rRNA binding"/>
    <property type="evidence" value="ECO:0007669"/>
    <property type="project" value="UniProtKB-UniRule"/>
</dbReference>
<dbReference type="GO" id="GO:0003735">
    <property type="term" value="F:structural constituent of ribosome"/>
    <property type="evidence" value="ECO:0007669"/>
    <property type="project" value="InterPro"/>
</dbReference>
<dbReference type="GO" id="GO:0006412">
    <property type="term" value="P:translation"/>
    <property type="evidence" value="ECO:0007669"/>
    <property type="project" value="UniProtKB-UniRule"/>
</dbReference>
<dbReference type="FunFam" id="2.40.30.10:FF:000004">
    <property type="entry name" value="50S ribosomal protein L3"/>
    <property type="match status" value="1"/>
</dbReference>
<dbReference type="FunFam" id="3.30.160.810:FF:000001">
    <property type="entry name" value="50S ribosomal protein L3"/>
    <property type="match status" value="1"/>
</dbReference>
<dbReference type="Gene3D" id="3.30.160.810">
    <property type="match status" value="1"/>
</dbReference>
<dbReference type="Gene3D" id="2.40.30.10">
    <property type="entry name" value="Translation factors"/>
    <property type="match status" value="1"/>
</dbReference>
<dbReference type="HAMAP" id="MF_01325_B">
    <property type="entry name" value="Ribosomal_uL3_B"/>
    <property type="match status" value="1"/>
</dbReference>
<dbReference type="InterPro" id="IPR000597">
    <property type="entry name" value="Ribosomal_uL3"/>
</dbReference>
<dbReference type="InterPro" id="IPR019927">
    <property type="entry name" value="Ribosomal_uL3_bac/org-type"/>
</dbReference>
<dbReference type="InterPro" id="IPR019926">
    <property type="entry name" value="Ribosomal_uL3_CS"/>
</dbReference>
<dbReference type="InterPro" id="IPR009000">
    <property type="entry name" value="Transl_B-barrel_sf"/>
</dbReference>
<dbReference type="NCBIfam" id="TIGR03625">
    <property type="entry name" value="L3_bact"/>
    <property type="match status" value="1"/>
</dbReference>
<dbReference type="PANTHER" id="PTHR11229">
    <property type="entry name" value="50S RIBOSOMAL PROTEIN L3"/>
    <property type="match status" value="1"/>
</dbReference>
<dbReference type="PANTHER" id="PTHR11229:SF16">
    <property type="entry name" value="LARGE RIBOSOMAL SUBUNIT PROTEIN UL3C"/>
    <property type="match status" value="1"/>
</dbReference>
<dbReference type="Pfam" id="PF00297">
    <property type="entry name" value="Ribosomal_L3"/>
    <property type="match status" value="1"/>
</dbReference>
<dbReference type="SUPFAM" id="SSF50447">
    <property type="entry name" value="Translation proteins"/>
    <property type="match status" value="1"/>
</dbReference>
<dbReference type="PROSITE" id="PS00474">
    <property type="entry name" value="RIBOSOMAL_L3"/>
    <property type="match status" value="1"/>
</dbReference>
<evidence type="ECO:0000255" key="1">
    <source>
        <dbReference type="HAMAP-Rule" id="MF_01325"/>
    </source>
</evidence>
<evidence type="ECO:0000256" key="2">
    <source>
        <dbReference type="SAM" id="MobiDB-lite"/>
    </source>
</evidence>
<evidence type="ECO:0000305" key="3"/>
<organism>
    <name type="scientific">Shewanella baltica (strain OS185)</name>
    <dbReference type="NCBI Taxonomy" id="402882"/>
    <lineage>
        <taxon>Bacteria</taxon>
        <taxon>Pseudomonadati</taxon>
        <taxon>Pseudomonadota</taxon>
        <taxon>Gammaproteobacteria</taxon>
        <taxon>Alteromonadales</taxon>
        <taxon>Shewanellaceae</taxon>
        <taxon>Shewanella</taxon>
    </lineage>
</organism>
<reference key="1">
    <citation type="submission" date="2007-07" db="EMBL/GenBank/DDBJ databases">
        <title>Complete sequence of chromosome of Shewanella baltica OS185.</title>
        <authorList>
            <consortium name="US DOE Joint Genome Institute"/>
            <person name="Copeland A."/>
            <person name="Lucas S."/>
            <person name="Lapidus A."/>
            <person name="Barry K."/>
            <person name="Glavina del Rio T."/>
            <person name="Dalin E."/>
            <person name="Tice H."/>
            <person name="Pitluck S."/>
            <person name="Sims D."/>
            <person name="Brettin T."/>
            <person name="Bruce D."/>
            <person name="Detter J.C."/>
            <person name="Han C."/>
            <person name="Schmutz J."/>
            <person name="Larimer F."/>
            <person name="Land M."/>
            <person name="Hauser L."/>
            <person name="Kyrpides N."/>
            <person name="Mikhailova N."/>
            <person name="Brettar I."/>
            <person name="Rodrigues J."/>
            <person name="Konstantinidis K."/>
            <person name="Tiedje J."/>
            <person name="Richardson P."/>
        </authorList>
    </citation>
    <scope>NUCLEOTIDE SEQUENCE [LARGE SCALE GENOMIC DNA]</scope>
    <source>
        <strain>OS185</strain>
    </source>
</reference>
<gene>
    <name evidence="1" type="primary">rplC</name>
    <name type="ordered locus">Shew185_0196</name>
</gene>
<sequence>MAIGLIGRKVGMTRIFTEDGVSIPVTVIEVAGNRVTQVKTLETDGYRALQVTTGTKKANRITKPEAGHFAKSGVEAGRGLWEMRLVDGEGEGIEVGAELNVDIFADVAKVDVTGQSKGKGFQGGVKRWNFRTQDMTHGNSLSHRSNGSIGQNQTPGRVFKGKKMSGHMGAERVTTQNLVVVRVDVERNLLLVRGAVPGATNGDLIIKPAVKA</sequence>
<name>RL3_SHEB8</name>
<protein>
    <recommendedName>
        <fullName evidence="1">Large ribosomal subunit protein uL3</fullName>
    </recommendedName>
    <alternativeName>
        <fullName evidence="3">50S ribosomal protein L3</fullName>
    </alternativeName>
</protein>